<keyword id="KW-0067">ATP-binding</keyword>
<keyword id="KW-0963">Cytoplasm</keyword>
<keyword id="KW-0436">Ligase</keyword>
<keyword id="KW-0547">Nucleotide-binding</keyword>
<evidence type="ECO:0000250" key="1"/>
<evidence type="ECO:0000305" key="2"/>
<comment type="function">
    <text evidence="1">Catalyzes the conversion of 3'-phosphate to a 2',3'-cyclic phosphodiester at the end of RNA. The mechanism of action of the enzyme occurs in 3 steps: (A) adenylation of the enzyme by ATP; (B) transfer of adenylate to an RNA-N3'P to produce RNA-N3'PP5'A; (C) and attack of the adjacent 2'-hydroxyl on the 3'-phosphorus in the diester linkage to produce the cyclic end product. The biological role of this enzyme is unknown but it is likely to function in some aspects of cellular RNA processing (By similarity).</text>
</comment>
<comment type="catalytic activity">
    <reaction>
        <text>a 3'-end 3'-phospho-ribonucleotide-RNA + ATP = a 3'-end 2',3'-cyclophospho-ribonucleotide-RNA + AMP + diphosphate</text>
        <dbReference type="Rhea" id="RHEA:23976"/>
        <dbReference type="Rhea" id="RHEA-COMP:10463"/>
        <dbReference type="Rhea" id="RHEA-COMP:10464"/>
        <dbReference type="ChEBI" id="CHEBI:30616"/>
        <dbReference type="ChEBI" id="CHEBI:33019"/>
        <dbReference type="ChEBI" id="CHEBI:83062"/>
        <dbReference type="ChEBI" id="CHEBI:83064"/>
        <dbReference type="ChEBI" id="CHEBI:456215"/>
        <dbReference type="EC" id="6.5.1.4"/>
    </reaction>
</comment>
<comment type="subcellular location">
    <subcellularLocation>
        <location evidence="2">Cytoplasm</location>
    </subcellularLocation>
</comment>
<comment type="similarity">
    <text evidence="2">Belongs to the RNA 3'-terminal cyclase family. Type 1 subfamily.</text>
</comment>
<sequence>MITIDGSYGEGGGQILRTSIALSAITGEPVRIINIRANRPNPGLRPQHLHGILALKHLANADVKGAHVGSRELVFIPKRLEAKKVEVNIGTAGSITLVLQALLPAMAFAKNRVEFKITGGTDVPWSPPVDYLANVTLFALEKLGIMAGIKIVRRGHYPKGGGIIEGYVEPWKERRELVATKYSSIAKVEGISHATNLPAHVAERQAKAAKEELSKLEVPVKIKTEVSKSLGPGSGIVVWAETDCLRLGGDALGKRGKPAEVVGKEAAQELLEQLKPGYCVDKFLGDQLIPFLAFSGGEIWVSEVTNHLKTNIWVVENFLGKVFDLDGEVGKPGKVKVVRRVE</sequence>
<gene>
    <name type="primary">rtcA</name>
    <name type="ordered locus">PYRAB06330</name>
    <name type="ORF">PAB1943</name>
</gene>
<name>RTCA_PYRAB</name>
<proteinExistence type="inferred from homology"/>
<feature type="chain" id="PRO_0000156430" description="RNA 3'-terminal phosphate cyclase">
    <location>
        <begin position="1"/>
        <end position="342"/>
    </location>
</feature>
<feature type="active site" description="Tele-AMP-histidine intermediate" evidence="1">
    <location>
        <position position="307"/>
    </location>
</feature>
<feature type="binding site" evidence="1">
    <location>
        <position position="100"/>
    </location>
    <ligand>
        <name>ATP</name>
        <dbReference type="ChEBI" id="CHEBI:30616"/>
    </ligand>
</feature>
<feature type="binding site" evidence="1">
    <location>
        <begin position="283"/>
        <end position="287"/>
    </location>
    <ligand>
        <name>ATP</name>
        <dbReference type="ChEBI" id="CHEBI:30616"/>
    </ligand>
</feature>
<protein>
    <recommendedName>
        <fullName>RNA 3'-terminal phosphate cyclase</fullName>
        <shortName>RNA cyclase</shortName>
        <shortName>RNA-3'-phosphate cyclase</shortName>
        <ecNumber>6.5.1.4</ecNumber>
    </recommendedName>
</protein>
<organism>
    <name type="scientific">Pyrococcus abyssi (strain GE5 / Orsay)</name>
    <dbReference type="NCBI Taxonomy" id="272844"/>
    <lineage>
        <taxon>Archaea</taxon>
        <taxon>Methanobacteriati</taxon>
        <taxon>Methanobacteriota</taxon>
        <taxon>Thermococci</taxon>
        <taxon>Thermococcales</taxon>
        <taxon>Thermococcaceae</taxon>
        <taxon>Pyrococcus</taxon>
    </lineage>
</organism>
<dbReference type="EC" id="6.5.1.4"/>
<dbReference type="EMBL" id="AJ248284">
    <property type="protein sequence ID" value="CAB49555.1"/>
    <property type="molecule type" value="Genomic_DNA"/>
</dbReference>
<dbReference type="EMBL" id="HE613800">
    <property type="protein sequence ID" value="CCE70027.1"/>
    <property type="molecule type" value="Genomic_DNA"/>
</dbReference>
<dbReference type="PIR" id="D75184">
    <property type="entry name" value="D75184"/>
</dbReference>
<dbReference type="RefSeq" id="WP_010867757.1">
    <property type="nucleotide sequence ID" value="NC_000868.1"/>
</dbReference>
<dbReference type="SMR" id="Q9V0Z6"/>
<dbReference type="STRING" id="272844.PAB1943"/>
<dbReference type="KEGG" id="pab:PAB1943"/>
<dbReference type="PATRIC" id="fig|272844.11.peg.673"/>
<dbReference type="eggNOG" id="arCOG04125">
    <property type="taxonomic scope" value="Archaea"/>
</dbReference>
<dbReference type="HOGENOM" id="CLU_027882_0_0_2"/>
<dbReference type="OrthoDB" id="7994at2157"/>
<dbReference type="PhylomeDB" id="Q9V0Z6"/>
<dbReference type="Proteomes" id="UP000000810">
    <property type="component" value="Chromosome"/>
</dbReference>
<dbReference type="Proteomes" id="UP000009139">
    <property type="component" value="Chromosome"/>
</dbReference>
<dbReference type="GO" id="GO:0005737">
    <property type="term" value="C:cytoplasm"/>
    <property type="evidence" value="ECO:0007669"/>
    <property type="project" value="UniProtKB-SubCell"/>
</dbReference>
<dbReference type="GO" id="GO:0005524">
    <property type="term" value="F:ATP binding"/>
    <property type="evidence" value="ECO:0007669"/>
    <property type="project" value="UniProtKB-KW"/>
</dbReference>
<dbReference type="GO" id="GO:0003963">
    <property type="term" value="F:RNA-3'-phosphate cyclase activity"/>
    <property type="evidence" value="ECO:0007669"/>
    <property type="project" value="UniProtKB-UniRule"/>
</dbReference>
<dbReference type="GO" id="GO:0006396">
    <property type="term" value="P:RNA processing"/>
    <property type="evidence" value="ECO:0007669"/>
    <property type="project" value="InterPro"/>
</dbReference>
<dbReference type="CDD" id="cd00874">
    <property type="entry name" value="RNA_Cyclase_Class_II"/>
    <property type="match status" value="1"/>
</dbReference>
<dbReference type="FunFam" id="3.30.360.20:FF:000002">
    <property type="entry name" value="RNA terminal phosphate cyclase-like 1"/>
    <property type="match status" value="1"/>
</dbReference>
<dbReference type="Gene3D" id="3.65.10.20">
    <property type="entry name" value="RNA 3'-terminal phosphate cyclase domain"/>
    <property type="match status" value="1"/>
</dbReference>
<dbReference type="Gene3D" id="3.30.360.20">
    <property type="entry name" value="RNA 3'-terminal phosphate cyclase, insert domain"/>
    <property type="match status" value="1"/>
</dbReference>
<dbReference type="HAMAP" id="MF_00200">
    <property type="entry name" value="RTC"/>
    <property type="match status" value="1"/>
</dbReference>
<dbReference type="InterPro" id="IPR013791">
    <property type="entry name" value="RNA3'-term_phos_cycl_insert"/>
</dbReference>
<dbReference type="InterPro" id="IPR023797">
    <property type="entry name" value="RNA3'_phos_cyclase_dom"/>
</dbReference>
<dbReference type="InterPro" id="IPR037136">
    <property type="entry name" value="RNA3'_phos_cyclase_dom_sf"/>
</dbReference>
<dbReference type="InterPro" id="IPR000228">
    <property type="entry name" value="RNA3'_term_phos_cyc"/>
</dbReference>
<dbReference type="InterPro" id="IPR017770">
    <property type="entry name" value="RNA3'_term_phos_cyc_type_1"/>
</dbReference>
<dbReference type="InterPro" id="IPR020719">
    <property type="entry name" value="RNA3'_term_phos_cycl-like_CS"/>
</dbReference>
<dbReference type="InterPro" id="IPR013792">
    <property type="entry name" value="RNA3'P_cycl/enolpyr_Trfase_a/b"/>
</dbReference>
<dbReference type="InterPro" id="IPR036553">
    <property type="entry name" value="RPTC_insert"/>
</dbReference>
<dbReference type="NCBIfam" id="TIGR03399">
    <property type="entry name" value="RNA_3prim_cycl"/>
    <property type="match status" value="1"/>
</dbReference>
<dbReference type="PANTHER" id="PTHR11096">
    <property type="entry name" value="RNA 3' TERMINAL PHOSPHATE CYCLASE"/>
    <property type="match status" value="1"/>
</dbReference>
<dbReference type="PANTHER" id="PTHR11096:SF0">
    <property type="entry name" value="RNA 3'-TERMINAL PHOSPHATE CYCLASE"/>
    <property type="match status" value="1"/>
</dbReference>
<dbReference type="Pfam" id="PF01137">
    <property type="entry name" value="RTC"/>
    <property type="match status" value="1"/>
</dbReference>
<dbReference type="Pfam" id="PF05189">
    <property type="entry name" value="RTC_insert"/>
    <property type="match status" value="1"/>
</dbReference>
<dbReference type="PIRSF" id="PIRSF005378">
    <property type="entry name" value="RNA3'_term_phos_cycl_euk"/>
    <property type="match status" value="1"/>
</dbReference>
<dbReference type="SUPFAM" id="SSF55205">
    <property type="entry name" value="EPT/RTPC-like"/>
    <property type="match status" value="1"/>
</dbReference>
<dbReference type="PROSITE" id="PS01287">
    <property type="entry name" value="RTC"/>
    <property type="match status" value="1"/>
</dbReference>
<reference key="1">
    <citation type="journal article" date="2003" name="Mol. Microbiol.">
        <title>An integrated analysis of the genome of the hyperthermophilic archaeon Pyrococcus abyssi.</title>
        <authorList>
            <person name="Cohen G.N."/>
            <person name="Barbe V."/>
            <person name="Flament D."/>
            <person name="Galperin M."/>
            <person name="Heilig R."/>
            <person name="Lecompte O."/>
            <person name="Poch O."/>
            <person name="Prieur D."/>
            <person name="Querellou J."/>
            <person name="Ripp R."/>
            <person name="Thierry J.-C."/>
            <person name="Van der Oost J."/>
            <person name="Weissenbach J."/>
            <person name="Zivanovic Y."/>
            <person name="Forterre P."/>
        </authorList>
    </citation>
    <scope>NUCLEOTIDE SEQUENCE [LARGE SCALE GENOMIC DNA]</scope>
    <source>
        <strain>GE5 / Orsay</strain>
    </source>
</reference>
<reference key="2">
    <citation type="journal article" date="2012" name="Curr. Microbiol.">
        <title>Re-annotation of two hyperthermophilic archaea Pyrococcus abyssi GE5 and Pyrococcus furiosus DSM 3638.</title>
        <authorList>
            <person name="Gao J."/>
            <person name="Wang J."/>
        </authorList>
    </citation>
    <scope>GENOME REANNOTATION</scope>
    <source>
        <strain>GE5 / Orsay</strain>
    </source>
</reference>
<accession>Q9V0Z6</accession>
<accession>G8ZJA0</accession>